<comment type="function">
    <text evidence="1">Located at the top of the head of the 30S subunit, it contacts several helices of the 16S rRNA. In the 70S ribosome it contacts the 23S rRNA (bridge B1a) and protein L5 of the 50S subunit (bridge B1b), connecting the 2 subunits; these bridges are implicated in subunit movement. Contacts the tRNAs in the A and P-sites.</text>
</comment>
<comment type="subunit">
    <text evidence="1">Part of the 30S ribosomal subunit. Forms a loose heterodimer with protein S19. Forms two bridges to the 50S subunit in the 70S ribosome.</text>
</comment>
<comment type="similarity">
    <text evidence="1">Belongs to the universal ribosomal protein uS13 family.</text>
</comment>
<gene>
    <name evidence="1" type="primary">rpsM</name>
    <name evidence="1" type="synonym">rps13</name>
    <name type="ordered locus">SynWH7803_0413</name>
</gene>
<protein>
    <recommendedName>
        <fullName evidence="1">Small ribosomal subunit protein uS13</fullName>
    </recommendedName>
    <alternativeName>
        <fullName evidence="3">30S ribosomal protein S13</fullName>
    </alternativeName>
</protein>
<reference key="1">
    <citation type="submission" date="2006-05" db="EMBL/GenBank/DDBJ databases">
        <authorList>
            <consortium name="Genoscope"/>
        </authorList>
    </citation>
    <scope>NUCLEOTIDE SEQUENCE [LARGE SCALE GENOMIC DNA]</scope>
    <source>
        <strain>WH7803</strain>
    </source>
</reference>
<dbReference type="EMBL" id="CT971583">
    <property type="protein sequence ID" value="CAK22839.1"/>
    <property type="molecule type" value="Genomic_DNA"/>
</dbReference>
<dbReference type="SMR" id="A5GIS4"/>
<dbReference type="STRING" id="32051.SynWH7803_0413"/>
<dbReference type="KEGG" id="syx:SynWH7803_0413"/>
<dbReference type="eggNOG" id="COG0099">
    <property type="taxonomic scope" value="Bacteria"/>
</dbReference>
<dbReference type="HOGENOM" id="CLU_103849_1_2_3"/>
<dbReference type="OrthoDB" id="9803610at2"/>
<dbReference type="Proteomes" id="UP000001566">
    <property type="component" value="Chromosome"/>
</dbReference>
<dbReference type="GO" id="GO:0005829">
    <property type="term" value="C:cytosol"/>
    <property type="evidence" value="ECO:0007669"/>
    <property type="project" value="TreeGrafter"/>
</dbReference>
<dbReference type="GO" id="GO:0015935">
    <property type="term" value="C:small ribosomal subunit"/>
    <property type="evidence" value="ECO:0007669"/>
    <property type="project" value="TreeGrafter"/>
</dbReference>
<dbReference type="GO" id="GO:0019843">
    <property type="term" value="F:rRNA binding"/>
    <property type="evidence" value="ECO:0007669"/>
    <property type="project" value="UniProtKB-UniRule"/>
</dbReference>
<dbReference type="GO" id="GO:0003735">
    <property type="term" value="F:structural constituent of ribosome"/>
    <property type="evidence" value="ECO:0007669"/>
    <property type="project" value="InterPro"/>
</dbReference>
<dbReference type="GO" id="GO:0000049">
    <property type="term" value="F:tRNA binding"/>
    <property type="evidence" value="ECO:0007669"/>
    <property type="project" value="UniProtKB-UniRule"/>
</dbReference>
<dbReference type="GO" id="GO:0006412">
    <property type="term" value="P:translation"/>
    <property type="evidence" value="ECO:0007669"/>
    <property type="project" value="UniProtKB-UniRule"/>
</dbReference>
<dbReference type="FunFam" id="1.10.8.50:FF:000001">
    <property type="entry name" value="30S ribosomal protein S13"/>
    <property type="match status" value="1"/>
</dbReference>
<dbReference type="Gene3D" id="1.10.8.50">
    <property type="match status" value="1"/>
</dbReference>
<dbReference type="Gene3D" id="4.10.910.10">
    <property type="entry name" value="30s ribosomal protein s13, domain 2"/>
    <property type="match status" value="1"/>
</dbReference>
<dbReference type="HAMAP" id="MF_01315">
    <property type="entry name" value="Ribosomal_uS13"/>
    <property type="match status" value="1"/>
</dbReference>
<dbReference type="InterPro" id="IPR027437">
    <property type="entry name" value="Rbsml_uS13_C"/>
</dbReference>
<dbReference type="InterPro" id="IPR001892">
    <property type="entry name" value="Ribosomal_uS13"/>
</dbReference>
<dbReference type="InterPro" id="IPR010979">
    <property type="entry name" value="Ribosomal_uS13-like_H2TH"/>
</dbReference>
<dbReference type="InterPro" id="IPR019980">
    <property type="entry name" value="Ribosomal_uS13_bac-type"/>
</dbReference>
<dbReference type="InterPro" id="IPR018269">
    <property type="entry name" value="Ribosomal_uS13_CS"/>
</dbReference>
<dbReference type="NCBIfam" id="TIGR03631">
    <property type="entry name" value="uS13_bact"/>
    <property type="match status" value="1"/>
</dbReference>
<dbReference type="PANTHER" id="PTHR10871">
    <property type="entry name" value="30S RIBOSOMAL PROTEIN S13/40S RIBOSOMAL PROTEIN S18"/>
    <property type="match status" value="1"/>
</dbReference>
<dbReference type="PANTHER" id="PTHR10871:SF1">
    <property type="entry name" value="SMALL RIBOSOMAL SUBUNIT PROTEIN US13M"/>
    <property type="match status" value="1"/>
</dbReference>
<dbReference type="Pfam" id="PF00416">
    <property type="entry name" value="Ribosomal_S13"/>
    <property type="match status" value="1"/>
</dbReference>
<dbReference type="PIRSF" id="PIRSF002134">
    <property type="entry name" value="Ribosomal_S13"/>
    <property type="match status" value="1"/>
</dbReference>
<dbReference type="SUPFAM" id="SSF46946">
    <property type="entry name" value="S13-like H2TH domain"/>
    <property type="match status" value="1"/>
</dbReference>
<dbReference type="PROSITE" id="PS00646">
    <property type="entry name" value="RIBOSOMAL_S13_1"/>
    <property type="match status" value="1"/>
</dbReference>
<dbReference type="PROSITE" id="PS50159">
    <property type="entry name" value="RIBOSOMAL_S13_2"/>
    <property type="match status" value="1"/>
</dbReference>
<name>RS13_SYNPW</name>
<accession>A5GIS4</accession>
<organism>
    <name type="scientific">Synechococcus sp. (strain WH7803)</name>
    <dbReference type="NCBI Taxonomy" id="32051"/>
    <lineage>
        <taxon>Bacteria</taxon>
        <taxon>Bacillati</taxon>
        <taxon>Cyanobacteriota</taxon>
        <taxon>Cyanophyceae</taxon>
        <taxon>Synechococcales</taxon>
        <taxon>Synechococcaceae</taxon>
        <taxon>Synechococcus</taxon>
    </lineage>
</organism>
<proteinExistence type="inferred from homology"/>
<sequence>MARIAGVDIPRDKRIEVALTYIYGIGLTRAQTILSKTGVNPDTRVKDLEDGDVQKLRGATEAFTIEGDLRRQEGMALKRLQDIGCVRGRRHRMSLPVRGQRTRTNARTRRGARKTVAGKKK</sequence>
<keyword id="KW-1185">Reference proteome</keyword>
<keyword id="KW-0687">Ribonucleoprotein</keyword>
<keyword id="KW-0689">Ribosomal protein</keyword>
<keyword id="KW-0694">RNA-binding</keyword>
<keyword id="KW-0699">rRNA-binding</keyword>
<keyword id="KW-0820">tRNA-binding</keyword>
<feature type="chain" id="PRO_0000306735" description="Small ribosomal subunit protein uS13">
    <location>
        <begin position="1"/>
        <end position="121"/>
    </location>
</feature>
<feature type="region of interest" description="Disordered" evidence="2">
    <location>
        <begin position="97"/>
        <end position="121"/>
    </location>
</feature>
<feature type="compositionally biased region" description="Basic residues" evidence="2">
    <location>
        <begin position="100"/>
        <end position="121"/>
    </location>
</feature>
<evidence type="ECO:0000255" key="1">
    <source>
        <dbReference type="HAMAP-Rule" id="MF_01315"/>
    </source>
</evidence>
<evidence type="ECO:0000256" key="2">
    <source>
        <dbReference type="SAM" id="MobiDB-lite"/>
    </source>
</evidence>
<evidence type="ECO:0000305" key="3"/>